<keyword id="KW-0333">Golgi apparatus</keyword>
<keyword id="KW-0472">Membrane</keyword>
<keyword id="KW-0653">Protein transport</keyword>
<keyword id="KW-1185">Reference proteome</keyword>
<keyword id="KW-0813">Transport</keyword>
<reference key="1">
    <citation type="journal article" date="2004" name="Genome Res.">
        <title>The status, quality, and expansion of the NIH full-length cDNA project: the Mammalian Gene Collection (MGC).</title>
        <authorList>
            <consortium name="The MGC Project Team"/>
        </authorList>
    </citation>
    <scope>NUCLEOTIDE SEQUENCE [LARGE SCALE MRNA]</scope>
    <source>
        <tissue>Testis</tissue>
    </source>
</reference>
<accession>Q68FP9</accession>
<proteinExistence type="evidence at transcript level"/>
<sequence length="657" mass="72957">MADTSGEVAAVPASGAANGLSNGAGATPAQPNNPLSRKLHKILETRLENDKEMLEALKALSAFFVENSLRTRRNLRGDIERRSLAINEEFVSIFKDVKEELESINEDVQAMSSCCQDMTSRLQAAKEQTQDLIVKTTKLQAENQRLEIRAQVADAFLSKFQLTSDEMTLLRGTRGGPVTEDFFKALGRVKQIHNDVKVLLRTNQQTAGLEIMEQMALLQETAYERLYRWAQSECRALTQESCDVSAVLTQAMEALQDRPVLYKYTLDEFGTARRSTVVRGFIDALTRGGPGGTPRPIEMHSHDPLRYVGDMLAWLHQATASEKEHLEALLKHVTAQGVKENIQEVVGHITEGVCRPLKVRIEQVILAEPGAVLLYKISNLLKFYHHTISGIVGNSAATLLTTIEEMHLLSKKIFFSSLSLHANKLMDKIELPPPDLGPSSALSQTLTLLRDVLASHDSSVVPLDARQADFVQVLSCVLDPLLQMCTVSASNLGTADMATFMVNSLYMMKTTLALFEFTDRRLEMLQFQIEAHLDTLINEQASYVLTRVGLSYIYNTIQQHRPDQGSLASMPNLDSVALKAAMAQFDRYLSAPDHLLMPQLNSLLSATVKEQIIKQSTELVCRAYGEVHAAVMNPVNAYKDPESILHRSPEQVKTLLS</sequence>
<name>COG6_RAT</name>
<protein>
    <recommendedName>
        <fullName>Conserved oligomeric Golgi complex subunit 6</fullName>
        <shortName>COG complex subunit 6</shortName>
    </recommendedName>
    <alternativeName>
        <fullName>Component of oligomeric Golgi complex 6</fullName>
    </alternativeName>
</protein>
<gene>
    <name type="primary">Cog6</name>
</gene>
<dbReference type="EMBL" id="BC079442">
    <property type="protein sequence ID" value="AAH79442.1"/>
    <property type="molecule type" value="mRNA"/>
</dbReference>
<dbReference type="RefSeq" id="NP_001004262.1">
    <property type="nucleotide sequence ID" value="NM_001004262.1"/>
</dbReference>
<dbReference type="SMR" id="Q68FP9"/>
<dbReference type="FunCoup" id="Q68FP9">
    <property type="interactions" value="2360"/>
</dbReference>
<dbReference type="STRING" id="10116.ENSRNOP00000018385"/>
<dbReference type="GlyGen" id="Q68FP9">
    <property type="glycosylation" value="2 sites"/>
</dbReference>
<dbReference type="PhosphoSitePlus" id="Q68FP9"/>
<dbReference type="jPOST" id="Q68FP9"/>
<dbReference type="PaxDb" id="10116-ENSRNOP00000018385"/>
<dbReference type="GeneID" id="310411"/>
<dbReference type="KEGG" id="rno:310411"/>
<dbReference type="UCSC" id="RGD:1303283">
    <property type="organism name" value="rat"/>
</dbReference>
<dbReference type="AGR" id="RGD:1303283"/>
<dbReference type="CTD" id="57511"/>
<dbReference type="RGD" id="1303283">
    <property type="gene designation" value="Cog6"/>
</dbReference>
<dbReference type="VEuPathDB" id="HostDB:ENSRNOG00000013660"/>
<dbReference type="eggNOG" id="KOG3758">
    <property type="taxonomic scope" value="Eukaryota"/>
</dbReference>
<dbReference type="HOGENOM" id="CLU_011361_3_0_1"/>
<dbReference type="InParanoid" id="Q68FP9"/>
<dbReference type="OrthoDB" id="44496at9989"/>
<dbReference type="PhylomeDB" id="Q68FP9"/>
<dbReference type="TreeFam" id="TF314527"/>
<dbReference type="Reactome" id="R-RNO-6807878">
    <property type="pathway name" value="COPI-mediated anterograde transport"/>
</dbReference>
<dbReference type="Reactome" id="R-RNO-6811438">
    <property type="pathway name" value="Intra-Golgi traffic"/>
</dbReference>
<dbReference type="Reactome" id="R-RNO-6811440">
    <property type="pathway name" value="Retrograde transport at the Trans-Golgi-Network"/>
</dbReference>
<dbReference type="PRO" id="PR:Q68FP9"/>
<dbReference type="Proteomes" id="UP000002494">
    <property type="component" value="Chromosome 2"/>
</dbReference>
<dbReference type="Bgee" id="ENSRNOG00000013660">
    <property type="expression patterns" value="Expressed in testis and 19 other cell types or tissues"/>
</dbReference>
<dbReference type="GO" id="GO:0000139">
    <property type="term" value="C:Golgi membrane"/>
    <property type="evidence" value="ECO:0007669"/>
    <property type="project" value="UniProtKB-SubCell"/>
</dbReference>
<dbReference type="GO" id="GO:0017119">
    <property type="term" value="C:Golgi transport complex"/>
    <property type="evidence" value="ECO:0000266"/>
    <property type="project" value="RGD"/>
</dbReference>
<dbReference type="GO" id="GO:0070085">
    <property type="term" value="P:glycosylation"/>
    <property type="evidence" value="ECO:0000250"/>
    <property type="project" value="UniProtKB"/>
</dbReference>
<dbReference type="GO" id="GO:0007030">
    <property type="term" value="P:Golgi organization"/>
    <property type="evidence" value="ECO:0000266"/>
    <property type="project" value="RGD"/>
</dbReference>
<dbReference type="GO" id="GO:0006891">
    <property type="term" value="P:intra-Golgi vesicle-mediated transport"/>
    <property type="evidence" value="ECO:0000318"/>
    <property type="project" value="GO_Central"/>
</dbReference>
<dbReference type="GO" id="GO:0015031">
    <property type="term" value="P:protein transport"/>
    <property type="evidence" value="ECO:0007669"/>
    <property type="project" value="UniProtKB-KW"/>
</dbReference>
<dbReference type="GO" id="GO:0000301">
    <property type="term" value="P:retrograde transport, vesicle recycling within Golgi"/>
    <property type="evidence" value="ECO:0000266"/>
    <property type="project" value="RGD"/>
</dbReference>
<dbReference type="InterPro" id="IPR010490">
    <property type="entry name" value="COG6"/>
</dbReference>
<dbReference type="InterPro" id="IPR048369">
    <property type="entry name" value="COG6_C"/>
</dbReference>
<dbReference type="InterPro" id="IPR048368">
    <property type="entry name" value="COG6_N"/>
</dbReference>
<dbReference type="PANTHER" id="PTHR21506">
    <property type="entry name" value="COMPONENT OF OLIGOMERIC GOLGI COMPLEX 6"/>
    <property type="match status" value="1"/>
</dbReference>
<dbReference type="PANTHER" id="PTHR21506:SF0">
    <property type="entry name" value="CONSERVED OLIGOMERIC GOLGI COMPLEX SUBUNIT 6"/>
    <property type="match status" value="1"/>
</dbReference>
<dbReference type="Pfam" id="PF20653">
    <property type="entry name" value="COG6_C"/>
    <property type="match status" value="1"/>
</dbReference>
<dbReference type="Pfam" id="PF06419">
    <property type="entry name" value="COG6_N"/>
    <property type="match status" value="1"/>
</dbReference>
<dbReference type="SMART" id="SM01087">
    <property type="entry name" value="COG6"/>
    <property type="match status" value="1"/>
</dbReference>
<organism>
    <name type="scientific">Rattus norvegicus</name>
    <name type="common">Rat</name>
    <dbReference type="NCBI Taxonomy" id="10116"/>
    <lineage>
        <taxon>Eukaryota</taxon>
        <taxon>Metazoa</taxon>
        <taxon>Chordata</taxon>
        <taxon>Craniata</taxon>
        <taxon>Vertebrata</taxon>
        <taxon>Euteleostomi</taxon>
        <taxon>Mammalia</taxon>
        <taxon>Eutheria</taxon>
        <taxon>Euarchontoglires</taxon>
        <taxon>Glires</taxon>
        <taxon>Rodentia</taxon>
        <taxon>Myomorpha</taxon>
        <taxon>Muroidea</taxon>
        <taxon>Muridae</taxon>
        <taxon>Murinae</taxon>
        <taxon>Rattus</taxon>
    </lineage>
</organism>
<feature type="chain" id="PRO_0000328218" description="Conserved oligomeric Golgi complex subunit 6">
    <location>
        <begin position="1"/>
        <end position="657"/>
    </location>
</feature>
<feature type="region of interest" description="Disordered" evidence="2">
    <location>
        <begin position="14"/>
        <end position="36"/>
    </location>
</feature>
<feature type="compositionally biased region" description="Low complexity" evidence="2">
    <location>
        <begin position="14"/>
        <end position="26"/>
    </location>
</feature>
<comment type="function">
    <text evidence="1">Required for normal Golgi function.</text>
</comment>
<comment type="subunit">
    <text evidence="1">Component of the conserved oligomeric Golgi complex which is composed of eight different subunits and is required for normal Golgi morphology and localization.</text>
</comment>
<comment type="subcellular location">
    <subcellularLocation>
        <location evidence="1">Golgi apparatus membrane</location>
        <topology evidence="1">Peripheral membrane protein</topology>
    </subcellularLocation>
</comment>
<comment type="similarity">
    <text evidence="3">Belongs to the COG6 family.</text>
</comment>
<evidence type="ECO:0000250" key="1"/>
<evidence type="ECO:0000256" key="2">
    <source>
        <dbReference type="SAM" id="MobiDB-lite"/>
    </source>
</evidence>
<evidence type="ECO:0000305" key="3"/>